<comment type="function">
    <text evidence="1">One of the primary rRNA binding proteins, it binds directly to 16S rRNA central domain where it helps coordinate assembly of the platform of the 30S subunit.</text>
</comment>
<comment type="subunit">
    <text evidence="1">Part of the 30S ribosomal subunit. Contacts proteins S5 and S12.</text>
</comment>
<comment type="similarity">
    <text evidence="1">Belongs to the universal ribosomal protein uS8 family.</text>
</comment>
<gene>
    <name evidence="1" type="primary">rpsH</name>
    <name type="ordered locus">YPK_0297</name>
</gene>
<name>RS8_YERPY</name>
<feature type="chain" id="PRO_1000140643" description="Small ribosomal subunit protein uS8">
    <location>
        <begin position="1"/>
        <end position="130"/>
    </location>
</feature>
<protein>
    <recommendedName>
        <fullName evidence="1">Small ribosomal subunit protein uS8</fullName>
    </recommendedName>
    <alternativeName>
        <fullName evidence="2">30S ribosomal protein S8</fullName>
    </alternativeName>
</protein>
<evidence type="ECO:0000255" key="1">
    <source>
        <dbReference type="HAMAP-Rule" id="MF_01302"/>
    </source>
</evidence>
<evidence type="ECO:0000305" key="2"/>
<sequence length="130" mass="14109">MSMQDPIADMLTRIRNGQAANKVAVTMPSSKLKVAIANVLKEEGFIEDFKIEGDTKPVLELALKYFQGKAVVESIQRISRPGLRIYKKKDELPKVMAGLGIAVISTSKGVMTDRAARQAGLGGEIICYVA</sequence>
<keyword id="KW-0687">Ribonucleoprotein</keyword>
<keyword id="KW-0689">Ribosomal protein</keyword>
<keyword id="KW-0694">RNA-binding</keyword>
<keyword id="KW-0699">rRNA-binding</keyword>
<organism>
    <name type="scientific">Yersinia pseudotuberculosis serotype O:3 (strain YPIII)</name>
    <dbReference type="NCBI Taxonomy" id="502800"/>
    <lineage>
        <taxon>Bacteria</taxon>
        <taxon>Pseudomonadati</taxon>
        <taxon>Pseudomonadota</taxon>
        <taxon>Gammaproteobacteria</taxon>
        <taxon>Enterobacterales</taxon>
        <taxon>Yersiniaceae</taxon>
        <taxon>Yersinia</taxon>
    </lineage>
</organism>
<reference key="1">
    <citation type="submission" date="2008-02" db="EMBL/GenBank/DDBJ databases">
        <title>Complete sequence of Yersinia pseudotuberculosis YPIII.</title>
        <authorList>
            <consortium name="US DOE Joint Genome Institute"/>
            <person name="Copeland A."/>
            <person name="Lucas S."/>
            <person name="Lapidus A."/>
            <person name="Glavina del Rio T."/>
            <person name="Dalin E."/>
            <person name="Tice H."/>
            <person name="Bruce D."/>
            <person name="Goodwin L."/>
            <person name="Pitluck S."/>
            <person name="Munk A.C."/>
            <person name="Brettin T."/>
            <person name="Detter J.C."/>
            <person name="Han C."/>
            <person name="Tapia R."/>
            <person name="Schmutz J."/>
            <person name="Larimer F."/>
            <person name="Land M."/>
            <person name="Hauser L."/>
            <person name="Challacombe J.F."/>
            <person name="Green L."/>
            <person name="Lindler L.E."/>
            <person name="Nikolich M.P."/>
            <person name="Richardson P."/>
        </authorList>
    </citation>
    <scope>NUCLEOTIDE SEQUENCE [LARGE SCALE GENOMIC DNA]</scope>
    <source>
        <strain>YPIII</strain>
    </source>
</reference>
<accession>B1JIX5</accession>
<proteinExistence type="inferred from homology"/>
<dbReference type="EMBL" id="CP000950">
    <property type="protein sequence ID" value="ACA66610.1"/>
    <property type="molecule type" value="Genomic_DNA"/>
</dbReference>
<dbReference type="RefSeq" id="WP_002213332.1">
    <property type="nucleotide sequence ID" value="NZ_CP009792.1"/>
</dbReference>
<dbReference type="SMR" id="B1JIX5"/>
<dbReference type="GeneID" id="96663182"/>
<dbReference type="KEGG" id="ypy:YPK_0297"/>
<dbReference type="PATRIC" id="fig|502800.11.peg.904"/>
<dbReference type="GO" id="GO:1990904">
    <property type="term" value="C:ribonucleoprotein complex"/>
    <property type="evidence" value="ECO:0007669"/>
    <property type="project" value="UniProtKB-KW"/>
</dbReference>
<dbReference type="GO" id="GO:0005840">
    <property type="term" value="C:ribosome"/>
    <property type="evidence" value="ECO:0007669"/>
    <property type="project" value="UniProtKB-KW"/>
</dbReference>
<dbReference type="GO" id="GO:0019843">
    <property type="term" value="F:rRNA binding"/>
    <property type="evidence" value="ECO:0007669"/>
    <property type="project" value="UniProtKB-UniRule"/>
</dbReference>
<dbReference type="GO" id="GO:0003735">
    <property type="term" value="F:structural constituent of ribosome"/>
    <property type="evidence" value="ECO:0007669"/>
    <property type="project" value="InterPro"/>
</dbReference>
<dbReference type="GO" id="GO:0006412">
    <property type="term" value="P:translation"/>
    <property type="evidence" value="ECO:0007669"/>
    <property type="project" value="UniProtKB-UniRule"/>
</dbReference>
<dbReference type="FunFam" id="3.30.1370.30:FF:000003">
    <property type="entry name" value="30S ribosomal protein S8"/>
    <property type="match status" value="1"/>
</dbReference>
<dbReference type="FunFam" id="3.30.1490.10:FF:000001">
    <property type="entry name" value="30S ribosomal protein S8"/>
    <property type="match status" value="1"/>
</dbReference>
<dbReference type="Gene3D" id="3.30.1370.30">
    <property type="match status" value="1"/>
</dbReference>
<dbReference type="Gene3D" id="3.30.1490.10">
    <property type="match status" value="1"/>
</dbReference>
<dbReference type="HAMAP" id="MF_01302_B">
    <property type="entry name" value="Ribosomal_uS8_B"/>
    <property type="match status" value="1"/>
</dbReference>
<dbReference type="InterPro" id="IPR000630">
    <property type="entry name" value="Ribosomal_uS8"/>
</dbReference>
<dbReference type="InterPro" id="IPR047863">
    <property type="entry name" value="Ribosomal_uS8_CS"/>
</dbReference>
<dbReference type="InterPro" id="IPR035987">
    <property type="entry name" value="Ribosomal_uS8_sf"/>
</dbReference>
<dbReference type="NCBIfam" id="NF001109">
    <property type="entry name" value="PRK00136.1"/>
    <property type="match status" value="1"/>
</dbReference>
<dbReference type="PANTHER" id="PTHR11758">
    <property type="entry name" value="40S RIBOSOMAL PROTEIN S15A"/>
    <property type="match status" value="1"/>
</dbReference>
<dbReference type="Pfam" id="PF00410">
    <property type="entry name" value="Ribosomal_S8"/>
    <property type="match status" value="1"/>
</dbReference>
<dbReference type="SUPFAM" id="SSF56047">
    <property type="entry name" value="Ribosomal protein S8"/>
    <property type="match status" value="1"/>
</dbReference>
<dbReference type="PROSITE" id="PS00053">
    <property type="entry name" value="RIBOSOMAL_S8"/>
    <property type="match status" value="1"/>
</dbReference>